<organism>
    <name type="scientific">Streptococcus sanguinis (strain SK36)</name>
    <dbReference type="NCBI Taxonomy" id="388919"/>
    <lineage>
        <taxon>Bacteria</taxon>
        <taxon>Bacillati</taxon>
        <taxon>Bacillota</taxon>
        <taxon>Bacilli</taxon>
        <taxon>Lactobacillales</taxon>
        <taxon>Streptococcaceae</taxon>
        <taxon>Streptococcus</taxon>
    </lineage>
</organism>
<protein>
    <recommendedName>
        <fullName evidence="1">Putative pre-16S rRNA nuclease</fullName>
        <ecNumber evidence="1">3.1.-.-</ecNumber>
    </recommendedName>
</protein>
<accession>A3CQZ7</accession>
<feature type="chain" id="PRO_1000061573" description="Putative pre-16S rRNA nuclease">
    <location>
        <begin position="1"/>
        <end position="139"/>
    </location>
</feature>
<comment type="function">
    <text evidence="1">Could be a nuclease involved in processing of the 5'-end of pre-16S rRNA.</text>
</comment>
<comment type="subcellular location">
    <subcellularLocation>
        <location evidence="1">Cytoplasm</location>
    </subcellularLocation>
</comment>
<comment type="similarity">
    <text evidence="1">Belongs to the YqgF nuclease family.</text>
</comment>
<gene>
    <name type="ordered locus">SSA_2240</name>
</gene>
<sequence length="139" mass="15522">MRIMGLDVGSKTVGVAISDPLGFTAQGLEIIPIHEEKGEFGLERLGELVKEYKVDKFVIGLPKNMNNTSGPRVEASQAYGQRIAELFGLPVDYQDERLTTVAAERMLVEQADISRSKRKKVIDKLAAQLILQNYLDRNF</sequence>
<reference key="1">
    <citation type="journal article" date="2007" name="J. Bacteriol.">
        <title>Genome of the opportunistic pathogen Streptococcus sanguinis.</title>
        <authorList>
            <person name="Xu P."/>
            <person name="Alves J.M."/>
            <person name="Kitten T."/>
            <person name="Brown A."/>
            <person name="Chen Z."/>
            <person name="Ozaki L.S."/>
            <person name="Manque P."/>
            <person name="Ge X."/>
            <person name="Serrano M.G."/>
            <person name="Puiu D."/>
            <person name="Hendricks S."/>
            <person name="Wang Y."/>
            <person name="Chaplin M.D."/>
            <person name="Akan D."/>
            <person name="Paik S."/>
            <person name="Peterson D.L."/>
            <person name="Macrina F.L."/>
            <person name="Buck G.A."/>
        </authorList>
    </citation>
    <scope>NUCLEOTIDE SEQUENCE [LARGE SCALE GENOMIC DNA]</scope>
    <source>
        <strain>SK36</strain>
    </source>
</reference>
<keyword id="KW-0963">Cytoplasm</keyword>
<keyword id="KW-0378">Hydrolase</keyword>
<keyword id="KW-0540">Nuclease</keyword>
<keyword id="KW-1185">Reference proteome</keyword>
<keyword id="KW-0690">Ribosome biogenesis</keyword>
<name>YQGF_STRSV</name>
<dbReference type="EC" id="3.1.-.-" evidence="1"/>
<dbReference type="EMBL" id="CP000387">
    <property type="protein sequence ID" value="ABN45602.1"/>
    <property type="molecule type" value="Genomic_DNA"/>
</dbReference>
<dbReference type="RefSeq" id="WP_011837635.1">
    <property type="nucleotide sequence ID" value="NC_009009.1"/>
</dbReference>
<dbReference type="RefSeq" id="YP_001036152.1">
    <property type="nucleotide sequence ID" value="NC_009009.1"/>
</dbReference>
<dbReference type="SMR" id="A3CQZ7"/>
<dbReference type="STRING" id="388919.SSA_2240"/>
<dbReference type="KEGG" id="ssa:SSA_2240"/>
<dbReference type="PATRIC" id="fig|388919.9.peg.2122"/>
<dbReference type="eggNOG" id="COG0816">
    <property type="taxonomic scope" value="Bacteria"/>
</dbReference>
<dbReference type="HOGENOM" id="CLU_098240_2_0_9"/>
<dbReference type="OrthoDB" id="9796140at2"/>
<dbReference type="Proteomes" id="UP000002148">
    <property type="component" value="Chromosome"/>
</dbReference>
<dbReference type="GO" id="GO:0005829">
    <property type="term" value="C:cytosol"/>
    <property type="evidence" value="ECO:0007669"/>
    <property type="project" value="TreeGrafter"/>
</dbReference>
<dbReference type="GO" id="GO:0004518">
    <property type="term" value="F:nuclease activity"/>
    <property type="evidence" value="ECO:0007669"/>
    <property type="project" value="UniProtKB-KW"/>
</dbReference>
<dbReference type="GO" id="GO:0000967">
    <property type="term" value="P:rRNA 5'-end processing"/>
    <property type="evidence" value="ECO:0007669"/>
    <property type="project" value="UniProtKB-UniRule"/>
</dbReference>
<dbReference type="CDD" id="cd16964">
    <property type="entry name" value="YqgF"/>
    <property type="match status" value="1"/>
</dbReference>
<dbReference type="FunFam" id="3.30.420.140:FF:000003">
    <property type="entry name" value="Putative pre-16S rRNA nuclease"/>
    <property type="match status" value="1"/>
</dbReference>
<dbReference type="Gene3D" id="3.30.420.140">
    <property type="entry name" value="YqgF/RNase H-like domain"/>
    <property type="match status" value="1"/>
</dbReference>
<dbReference type="HAMAP" id="MF_00651">
    <property type="entry name" value="Nuclease_YqgF"/>
    <property type="match status" value="1"/>
</dbReference>
<dbReference type="InterPro" id="IPR012337">
    <property type="entry name" value="RNaseH-like_sf"/>
</dbReference>
<dbReference type="InterPro" id="IPR005227">
    <property type="entry name" value="YqgF"/>
</dbReference>
<dbReference type="InterPro" id="IPR006641">
    <property type="entry name" value="YqgF/RNaseH-like_dom"/>
</dbReference>
<dbReference type="InterPro" id="IPR037027">
    <property type="entry name" value="YqgF/RNaseH-like_dom_sf"/>
</dbReference>
<dbReference type="NCBIfam" id="TIGR00250">
    <property type="entry name" value="RNAse_H_YqgF"/>
    <property type="match status" value="1"/>
</dbReference>
<dbReference type="PANTHER" id="PTHR33317">
    <property type="entry name" value="POLYNUCLEOTIDYL TRANSFERASE, RIBONUCLEASE H-LIKE SUPERFAMILY PROTEIN"/>
    <property type="match status" value="1"/>
</dbReference>
<dbReference type="PANTHER" id="PTHR33317:SF4">
    <property type="entry name" value="POLYNUCLEOTIDYL TRANSFERASE, RIBONUCLEASE H-LIKE SUPERFAMILY PROTEIN"/>
    <property type="match status" value="1"/>
</dbReference>
<dbReference type="Pfam" id="PF03652">
    <property type="entry name" value="RuvX"/>
    <property type="match status" value="1"/>
</dbReference>
<dbReference type="SMART" id="SM00732">
    <property type="entry name" value="YqgFc"/>
    <property type="match status" value="1"/>
</dbReference>
<dbReference type="SUPFAM" id="SSF53098">
    <property type="entry name" value="Ribonuclease H-like"/>
    <property type="match status" value="1"/>
</dbReference>
<evidence type="ECO:0000255" key="1">
    <source>
        <dbReference type="HAMAP-Rule" id="MF_00651"/>
    </source>
</evidence>
<proteinExistence type="inferred from homology"/>